<reference key="1">
    <citation type="journal article" date="1998" name="Nature">
        <title>Deciphering the biology of Mycobacterium tuberculosis from the complete genome sequence.</title>
        <authorList>
            <person name="Cole S.T."/>
            <person name="Brosch R."/>
            <person name="Parkhill J."/>
            <person name="Garnier T."/>
            <person name="Churcher C.M."/>
            <person name="Harris D.E."/>
            <person name="Gordon S.V."/>
            <person name="Eiglmeier K."/>
            <person name="Gas S."/>
            <person name="Barry C.E. III"/>
            <person name="Tekaia F."/>
            <person name="Badcock K."/>
            <person name="Basham D."/>
            <person name="Brown D."/>
            <person name="Chillingworth T."/>
            <person name="Connor R."/>
            <person name="Davies R.M."/>
            <person name="Devlin K."/>
            <person name="Feltwell T."/>
            <person name="Gentles S."/>
            <person name="Hamlin N."/>
            <person name="Holroyd S."/>
            <person name="Hornsby T."/>
            <person name="Jagels K."/>
            <person name="Krogh A."/>
            <person name="McLean J."/>
            <person name="Moule S."/>
            <person name="Murphy L.D."/>
            <person name="Oliver S."/>
            <person name="Osborne J."/>
            <person name="Quail M.A."/>
            <person name="Rajandream M.A."/>
            <person name="Rogers J."/>
            <person name="Rutter S."/>
            <person name="Seeger K."/>
            <person name="Skelton S."/>
            <person name="Squares S."/>
            <person name="Squares R."/>
            <person name="Sulston J.E."/>
            <person name="Taylor K."/>
            <person name="Whitehead S."/>
            <person name="Barrell B.G."/>
        </authorList>
    </citation>
    <scope>NUCLEOTIDE SEQUENCE [LARGE SCALE GENOMIC DNA]</scope>
    <source>
        <strain>ATCC 25618 / H37Rv</strain>
    </source>
</reference>
<reference key="2">
    <citation type="journal article" date="2003" name="Biochemistry">
        <title>An FHA phosphoprotein recognition domain mediates protein EmbR phosphorylation by PknH, a Ser/Thr protein kinase from Mycobacterium tuberculosis.</title>
        <authorList>
            <person name="Molle V."/>
            <person name="Kremer L."/>
            <person name="Girard-Blanc C."/>
            <person name="Besra G.S."/>
            <person name="Cozzone A.J."/>
            <person name="Prost J.F."/>
        </authorList>
    </citation>
    <scope>PHOSPHORYLATION</scope>
    <scope>MUTAGENESIS OF ARG-312; SER-326 AND ASN-348</scope>
</reference>
<reference key="3">
    <citation type="journal article" date="2006" name="FEBS J.">
        <title>EmbR, a regulatory protein with ATPase activity, is a substrate of multiple serine/threonine kinases and phosphatase in Mycobacterium tuberculosis.</title>
        <authorList>
            <person name="Sharma K."/>
            <person name="Gupta M."/>
            <person name="Krupa A."/>
            <person name="Srinivasan N."/>
            <person name="Singh Y."/>
        </authorList>
    </citation>
    <scope>FUNCTION</scope>
    <scope>INTERACTION WITH RNA POLYMERASE</scope>
    <scope>PHOSPHORYLATION</scope>
    <scope>DEPHOSPHORYLATION</scope>
</reference>
<reference key="4">
    <citation type="journal article" date="2006" name="J. Bacteriol.">
        <title>Transcriptional control of the mycobacterial embCAB operon by PknH through a regulatory protein, EmbR, in vivo.</title>
        <authorList>
            <person name="Sharma K."/>
            <person name="Gupta M."/>
            <person name="Pathak M."/>
            <person name="Gupta N."/>
            <person name="Koul A."/>
            <person name="Sarangi S."/>
            <person name="Baweja R."/>
            <person name="Singh Y."/>
        </authorList>
    </citation>
    <scope>FUNCTION</scope>
    <scope>DNA-BINDING</scope>
    <scope>PHOSPHORYLATION</scope>
</reference>
<reference key="5">
    <citation type="journal article" date="2007" name="Biochem. Biophys. Res. Commun.">
        <title>Novel substrates of Mycobacterium tuberculosis PknH Ser/Thr kinase.</title>
        <authorList>
            <person name="Zheng X."/>
            <person name="Papavinasasundaram K.G."/>
            <person name="Av-Gay Y."/>
        </authorList>
    </citation>
    <scope>PHOSPHORYLATION</scope>
    <scope>MUTAGENESIS OF THR-209</scope>
    <source>
        <strain>ATCC 25618 / H37Rv</strain>
    </source>
</reference>
<reference key="6">
    <citation type="journal article" date="2011" name="Mol. Cell. Proteomics">
        <title>Proteogenomic analysis of Mycobacterium tuberculosis by high resolution mass spectrometry.</title>
        <authorList>
            <person name="Kelkar D.S."/>
            <person name="Kumar D."/>
            <person name="Kumar P."/>
            <person name="Balakrishnan L."/>
            <person name="Muthusamy B."/>
            <person name="Yadav A.K."/>
            <person name="Shrivastava P."/>
            <person name="Marimuthu A."/>
            <person name="Anand S."/>
            <person name="Sundaram H."/>
            <person name="Kingsbury R."/>
            <person name="Harsha H.C."/>
            <person name="Nair B."/>
            <person name="Prasad T.S."/>
            <person name="Chauhan D.S."/>
            <person name="Katoch K."/>
            <person name="Katoch V.M."/>
            <person name="Kumar P."/>
            <person name="Chaerkady R."/>
            <person name="Ramachandran S."/>
            <person name="Dash D."/>
            <person name="Pandey A."/>
        </authorList>
    </citation>
    <scope>IDENTIFICATION BY MASS SPECTROMETRY [LARGE SCALE ANALYSIS]</scope>
    <source>
        <strain>ATCC 25618 / H37Rv</strain>
    </source>
</reference>
<reference key="7">
    <citation type="journal article" date="2020" name="Mol. Microbiol.">
        <title>Depletion of the DarG antitoxin in Mycobacterium tuberculosis triggers the DNA-damage response and leads to cell death.</title>
        <authorList>
            <person name="Zaveri A."/>
            <person name="Wang R."/>
            <person name="Botella L."/>
            <person name="Sharma R."/>
            <person name="Zhu L."/>
            <person name="Wallach J.B."/>
            <person name="Song N."/>
            <person name="Jansen R.S."/>
            <person name="Rhee K.Y."/>
            <person name="Ehrt S."/>
            <person name="Schnappinger D."/>
        </authorList>
    </citation>
    <scope>SUBUNIT</scope>
    <source>
        <strain>H37Rv</strain>
    </source>
</reference>
<reference key="8">
    <citation type="journal article" date="2006" name="Proc. Natl. Acad. Sci. U.S.A.">
        <title>Molecular structure of EmbR, a response element of Ser/Thr kinase signaling in Mycobacterium tuberculosis.</title>
        <authorList>
            <person name="Alderwick L.J."/>
            <person name="Molle V."/>
            <person name="Kremer L."/>
            <person name="Cozzone A.J."/>
            <person name="Dafforn T.R."/>
            <person name="Besra G.S."/>
            <person name="Futterer K."/>
        </authorList>
    </citation>
    <scope>X-RAY CRYSTALLOGRAPHY (1.9 ANGSTROMS)</scope>
    <scope>DOMAIN</scope>
</reference>
<dbReference type="EMBL" id="AL123456">
    <property type="protein sequence ID" value="CCP44023.1"/>
    <property type="molecule type" value="Genomic_DNA"/>
</dbReference>
<dbReference type="PIR" id="C70754">
    <property type="entry name" value="C70754"/>
</dbReference>
<dbReference type="RefSeq" id="NP_215783.1">
    <property type="nucleotide sequence ID" value="NC_000962.3"/>
</dbReference>
<dbReference type="RefSeq" id="WP_003406553.1">
    <property type="nucleotide sequence ID" value="NZ_NVQJ01000030.1"/>
</dbReference>
<dbReference type="PDB" id="2FEZ">
    <property type="method" value="X-ray"/>
    <property type="resolution" value="2.00 A"/>
    <property type="chains" value="A=1-388"/>
</dbReference>
<dbReference type="PDB" id="2FF4">
    <property type="method" value="X-ray"/>
    <property type="resolution" value="1.90 A"/>
    <property type="chains" value="A/B=1-388"/>
</dbReference>
<dbReference type="PDBsum" id="2FEZ"/>
<dbReference type="PDBsum" id="2FF4"/>
<dbReference type="SMR" id="P9WGJ9"/>
<dbReference type="FunCoup" id="P9WGJ9">
    <property type="interactions" value="1"/>
</dbReference>
<dbReference type="IntAct" id="P9WGJ9">
    <property type="interactions" value="1"/>
</dbReference>
<dbReference type="STRING" id="83332.Rv1267c"/>
<dbReference type="PaxDb" id="83332-Rv1267c"/>
<dbReference type="DNASU" id="887026"/>
<dbReference type="GeneID" id="45425239"/>
<dbReference type="GeneID" id="887026"/>
<dbReference type="KEGG" id="mtu:Rv1267c"/>
<dbReference type="KEGG" id="mtv:RVBD_1267c"/>
<dbReference type="TubercuList" id="Rv1267c"/>
<dbReference type="eggNOG" id="COG1716">
    <property type="taxonomic scope" value="Bacteria"/>
</dbReference>
<dbReference type="eggNOG" id="COG3629">
    <property type="taxonomic scope" value="Bacteria"/>
</dbReference>
<dbReference type="InParanoid" id="P9WGJ9"/>
<dbReference type="OrthoDB" id="4336084at2"/>
<dbReference type="PhylomeDB" id="P9WGJ9"/>
<dbReference type="SABIO-RK" id="P9WGJ9"/>
<dbReference type="EvolutionaryTrace" id="P9WGJ9"/>
<dbReference type="Proteomes" id="UP000001584">
    <property type="component" value="Chromosome"/>
</dbReference>
<dbReference type="GO" id="GO:0009274">
    <property type="term" value="C:peptidoglycan-based cell wall"/>
    <property type="evidence" value="ECO:0007005"/>
    <property type="project" value="MTBBASE"/>
</dbReference>
<dbReference type="GO" id="GO:0005886">
    <property type="term" value="C:plasma membrane"/>
    <property type="evidence" value="ECO:0007005"/>
    <property type="project" value="MTBBASE"/>
</dbReference>
<dbReference type="GO" id="GO:0016887">
    <property type="term" value="F:ATP hydrolysis activity"/>
    <property type="evidence" value="ECO:0000314"/>
    <property type="project" value="MTBBASE"/>
</dbReference>
<dbReference type="GO" id="GO:0003677">
    <property type="term" value="F:DNA binding"/>
    <property type="evidence" value="ECO:0000314"/>
    <property type="project" value="MTBBASE"/>
</dbReference>
<dbReference type="GO" id="GO:0003924">
    <property type="term" value="F:GTPase activity"/>
    <property type="evidence" value="ECO:0000314"/>
    <property type="project" value="MTBBASE"/>
</dbReference>
<dbReference type="GO" id="GO:0000160">
    <property type="term" value="P:phosphorelay signal transduction system"/>
    <property type="evidence" value="ECO:0007669"/>
    <property type="project" value="UniProtKB-KW"/>
</dbReference>
<dbReference type="GO" id="GO:0045893">
    <property type="term" value="P:positive regulation of DNA-templated transcription"/>
    <property type="evidence" value="ECO:0000314"/>
    <property type="project" value="MTBBASE"/>
</dbReference>
<dbReference type="GO" id="GO:0006355">
    <property type="term" value="P:regulation of DNA-templated transcription"/>
    <property type="evidence" value="ECO:0000318"/>
    <property type="project" value="GO_Central"/>
</dbReference>
<dbReference type="CDD" id="cd15831">
    <property type="entry name" value="BTAD"/>
    <property type="match status" value="1"/>
</dbReference>
<dbReference type="CDD" id="cd00060">
    <property type="entry name" value="FHA"/>
    <property type="match status" value="1"/>
</dbReference>
<dbReference type="FunFam" id="1.25.40.10:FF:000222">
    <property type="entry name" value="SARP family transcriptional regulator"/>
    <property type="match status" value="1"/>
</dbReference>
<dbReference type="FunFam" id="2.60.200.20:FF:000055">
    <property type="entry name" value="Transcriptional regulator EmbR"/>
    <property type="match status" value="1"/>
</dbReference>
<dbReference type="FunFam" id="1.10.10.10:FF:000528">
    <property type="entry name" value="Transcriptional regulatory protein EmbR"/>
    <property type="match status" value="1"/>
</dbReference>
<dbReference type="Gene3D" id="2.60.200.20">
    <property type="match status" value="1"/>
</dbReference>
<dbReference type="Gene3D" id="1.25.40.10">
    <property type="entry name" value="Tetratricopeptide repeat domain"/>
    <property type="match status" value="1"/>
</dbReference>
<dbReference type="Gene3D" id="1.10.10.10">
    <property type="entry name" value="Winged helix-like DNA-binding domain superfamily/Winged helix DNA-binding domain"/>
    <property type="match status" value="1"/>
</dbReference>
<dbReference type="InterPro" id="IPR051677">
    <property type="entry name" value="AfsR-DnrI-RedD_regulator"/>
</dbReference>
<dbReference type="InterPro" id="IPR005158">
    <property type="entry name" value="BTAD"/>
</dbReference>
<dbReference type="InterPro" id="IPR000253">
    <property type="entry name" value="FHA_dom"/>
</dbReference>
<dbReference type="InterPro" id="IPR001867">
    <property type="entry name" value="OmpR/PhoB-type_DNA-bd"/>
</dbReference>
<dbReference type="InterPro" id="IPR016032">
    <property type="entry name" value="Sig_transdc_resp-reg_C-effctor"/>
</dbReference>
<dbReference type="InterPro" id="IPR008984">
    <property type="entry name" value="SMAD_FHA_dom_sf"/>
</dbReference>
<dbReference type="InterPro" id="IPR011990">
    <property type="entry name" value="TPR-like_helical_dom_sf"/>
</dbReference>
<dbReference type="InterPro" id="IPR036388">
    <property type="entry name" value="WH-like_DNA-bd_sf"/>
</dbReference>
<dbReference type="PANTHER" id="PTHR35807:SF1">
    <property type="entry name" value="TRANSCRIPTIONAL REGULATOR REDD"/>
    <property type="match status" value="1"/>
</dbReference>
<dbReference type="PANTHER" id="PTHR35807">
    <property type="entry name" value="TRANSCRIPTIONAL REGULATOR REDD-RELATED"/>
    <property type="match status" value="1"/>
</dbReference>
<dbReference type="Pfam" id="PF03704">
    <property type="entry name" value="BTAD"/>
    <property type="match status" value="1"/>
</dbReference>
<dbReference type="Pfam" id="PF00498">
    <property type="entry name" value="FHA"/>
    <property type="match status" value="1"/>
</dbReference>
<dbReference type="Pfam" id="PF00486">
    <property type="entry name" value="Trans_reg_C"/>
    <property type="match status" value="1"/>
</dbReference>
<dbReference type="SMART" id="SM01043">
    <property type="entry name" value="BTAD"/>
    <property type="match status" value="1"/>
</dbReference>
<dbReference type="SMART" id="SM00240">
    <property type="entry name" value="FHA"/>
    <property type="match status" value="1"/>
</dbReference>
<dbReference type="SMART" id="SM00862">
    <property type="entry name" value="Trans_reg_C"/>
    <property type="match status" value="1"/>
</dbReference>
<dbReference type="SUPFAM" id="SSF46894">
    <property type="entry name" value="C-terminal effector domain of the bipartite response regulators"/>
    <property type="match status" value="1"/>
</dbReference>
<dbReference type="SUPFAM" id="SSF49879">
    <property type="entry name" value="SMAD/FHA domain"/>
    <property type="match status" value="1"/>
</dbReference>
<dbReference type="SUPFAM" id="SSF48452">
    <property type="entry name" value="TPR-like"/>
    <property type="match status" value="1"/>
</dbReference>
<dbReference type="PROSITE" id="PS50006">
    <property type="entry name" value="FHA_DOMAIN"/>
    <property type="match status" value="1"/>
</dbReference>
<dbReference type="PROSITE" id="PS51755">
    <property type="entry name" value="OMPR_PHOB"/>
    <property type="match status" value="1"/>
</dbReference>
<feature type="chain" id="PRO_0000110008" description="Transcriptional regulatory protein EmbR">
    <location>
        <begin position="1"/>
        <end position="388"/>
    </location>
</feature>
<feature type="domain" description="FHA" evidence="1">
    <location>
        <begin position="308"/>
        <end position="357"/>
    </location>
</feature>
<feature type="DNA-binding region" description="OmpR/PhoB-type" evidence="2">
    <location>
        <begin position="2"/>
        <end position="105"/>
    </location>
</feature>
<feature type="mutagenesis site" description="Decreases phosphorylation by PknH." evidence="7">
    <original>T</original>
    <variation>A</variation>
    <location>
        <position position="209"/>
    </location>
</feature>
<feature type="mutagenesis site" description="Abolished phosphorylation." evidence="3">
    <original>R</original>
    <variation>A</variation>
    <location>
        <position position="312"/>
    </location>
</feature>
<feature type="mutagenesis site" description="Abolished phosphorylation." evidence="3">
    <original>S</original>
    <variation>A</variation>
    <location>
        <position position="326"/>
    </location>
</feature>
<feature type="mutagenesis site" description="Abolished phosphorylation." evidence="3">
    <original>N</original>
    <variation>A</variation>
    <location>
        <position position="348"/>
    </location>
</feature>
<feature type="strand" evidence="10">
    <location>
        <begin position="11"/>
        <end position="14"/>
    </location>
</feature>
<feature type="strand" evidence="10">
    <location>
        <begin position="16"/>
        <end position="18"/>
    </location>
</feature>
<feature type="strand" evidence="10">
    <location>
        <begin position="20"/>
        <end position="23"/>
    </location>
</feature>
<feature type="helix" evidence="10">
    <location>
        <begin position="33"/>
        <end position="44"/>
    </location>
</feature>
<feature type="turn" evidence="10">
    <location>
        <begin position="45"/>
        <end position="47"/>
    </location>
</feature>
<feature type="strand" evidence="10">
    <location>
        <begin position="48"/>
        <end position="51"/>
    </location>
</feature>
<feature type="helix" evidence="10">
    <location>
        <begin position="52"/>
        <end position="60"/>
    </location>
</feature>
<feature type="helix" evidence="10">
    <location>
        <begin position="68"/>
        <end position="83"/>
    </location>
</feature>
<feature type="helix" evidence="10">
    <location>
        <begin position="84"/>
        <end position="86"/>
    </location>
</feature>
<feature type="helix" evidence="10">
    <location>
        <begin position="90"/>
        <end position="93"/>
    </location>
</feature>
<feature type="strand" evidence="10">
    <location>
        <begin position="94"/>
        <end position="96"/>
    </location>
</feature>
<feature type="strand" evidence="10">
    <location>
        <begin position="98"/>
        <end position="103"/>
    </location>
</feature>
<feature type="helix" evidence="10">
    <location>
        <begin position="107"/>
        <end position="109"/>
    </location>
</feature>
<feature type="helix" evidence="10">
    <location>
        <begin position="111"/>
        <end position="127"/>
    </location>
</feature>
<feature type="helix" evidence="10">
    <location>
        <begin position="131"/>
        <end position="142"/>
    </location>
</feature>
<feature type="helix" evidence="10">
    <location>
        <begin position="151"/>
        <end position="153"/>
    </location>
</feature>
<feature type="helix" evidence="10">
    <location>
        <begin position="159"/>
        <end position="183"/>
    </location>
</feature>
<feature type="helix" evidence="10">
    <location>
        <begin position="187"/>
        <end position="200"/>
    </location>
</feature>
<feature type="helix" evidence="10">
    <location>
        <begin position="205"/>
        <end position="216"/>
    </location>
</feature>
<feature type="turn" evidence="10">
    <location>
        <begin position="217"/>
        <end position="219"/>
    </location>
</feature>
<feature type="helix" evidence="10">
    <location>
        <begin position="221"/>
        <end position="239"/>
    </location>
</feature>
<feature type="helix" evidence="10">
    <location>
        <begin position="245"/>
        <end position="255"/>
    </location>
</feature>
<feature type="helix" evidence="10">
    <location>
        <begin position="262"/>
        <end position="280"/>
    </location>
</feature>
<feature type="strand" evidence="10">
    <location>
        <begin position="285"/>
        <end position="287"/>
    </location>
</feature>
<feature type="strand" evidence="10">
    <location>
        <begin position="291"/>
        <end position="294"/>
    </location>
</feature>
<feature type="turn" evidence="10">
    <location>
        <begin position="295"/>
        <end position="297"/>
    </location>
</feature>
<feature type="strand" evidence="10">
    <location>
        <begin position="300"/>
        <end position="302"/>
    </location>
</feature>
<feature type="strand" evidence="10">
    <location>
        <begin position="305"/>
        <end position="313"/>
    </location>
</feature>
<feature type="strand" evidence="10">
    <location>
        <begin position="316"/>
        <end position="319"/>
    </location>
</feature>
<feature type="strand" evidence="10">
    <location>
        <begin position="330"/>
        <end position="334"/>
    </location>
</feature>
<feature type="strand" evidence="10">
    <location>
        <begin position="339"/>
        <end position="343"/>
    </location>
</feature>
<feature type="strand" evidence="10">
    <location>
        <begin position="358"/>
        <end position="363"/>
    </location>
</feature>
<feature type="strand" evidence="10">
    <location>
        <begin position="368"/>
        <end position="371"/>
    </location>
</feature>
<feature type="strand" evidence="10">
    <location>
        <begin position="374"/>
        <end position="379"/>
    </location>
</feature>
<evidence type="ECO:0000255" key="1">
    <source>
        <dbReference type="PROSITE-ProRule" id="PRU00086"/>
    </source>
</evidence>
<evidence type="ECO:0000255" key="2">
    <source>
        <dbReference type="PROSITE-ProRule" id="PRU01091"/>
    </source>
</evidence>
<evidence type="ECO:0000269" key="3">
    <source>
    </source>
</evidence>
<evidence type="ECO:0000269" key="4">
    <source>
    </source>
</evidence>
<evidence type="ECO:0000269" key="5">
    <source>
    </source>
</evidence>
<evidence type="ECO:0000269" key="6">
    <source>
    </source>
</evidence>
<evidence type="ECO:0000269" key="7">
    <source>
    </source>
</evidence>
<evidence type="ECO:0000269" key="8">
    <source>
    </source>
</evidence>
<evidence type="ECO:0000305" key="9"/>
<evidence type="ECO:0007829" key="10">
    <source>
        <dbReference type="PDB" id="2FF4"/>
    </source>
</evidence>
<accession>P9WGJ9</accession>
<accession>L0T949</accession>
<accession>P66799</accession>
<accession>Q11052</accession>
<keyword id="KW-0002">3D-structure</keyword>
<keyword id="KW-0238">DNA-binding</keyword>
<keyword id="KW-0597">Phosphoprotein</keyword>
<keyword id="KW-1185">Reference proteome</keyword>
<keyword id="KW-0804">Transcription</keyword>
<keyword id="KW-0805">Transcription regulation</keyword>
<keyword id="KW-0902">Two-component regulatory system</keyword>
<name>EMBR_MYCTU</name>
<sequence length="388" mass="41933">MAGSATVEKRLDFGLLGPLQMTIDGTPVPSGTPKQRAVLAMLVINRNRPVGVDALITALWEEWPPSGARASIHSYVSNLRKLLGGAGIDPRVVLAAAPPGYRLSIPDNTCDLGRFVAEKTAGVHAAAAGRFEQASRHLSAALREWRGPVLDDLRDFQFVEPFATALVEDKVLAHTAKAEAEIACGRASAVIAELEALTFEHPYREPLWTQLITAYYLSDRQSDALGAYRRVKTTLADDLGIDPGPTLRALNERILRQQPLDAKKSAKTTAAGTVTVLDQRTMASGQQAVAYLHDIASGRGYPLQAAATRIGRLHDNDIVLDSANVSRHHAVIVDTGTNYVINDLRSSNGVHVQHERIRSAVTLNDGDHIRICDHEFTFQISAGTHGGT</sequence>
<proteinExistence type="evidence at protein level"/>
<comment type="function">
    <text evidence="5 6">Positively regulates the transcription of the embCAB operon. Exhibits ATPase and GTPase activities.</text>
</comment>
<comment type="subunit">
    <text evidence="6 8">Interacts with RNA polymerase (PubMed:16817899). Co-immunoprecipitates with DarG in the presence and absence of darT (PubMed:32634279).</text>
</comment>
<comment type="domain">
    <text evidence="4">Contains a N-terminal winged-helix DNA-binding domain and a regulatory C-terminal forkhead-associated (FHA) domain, which mediates binding to a Thr-phosphorylated site in the cognate kinase.</text>
</comment>
<comment type="PTM">
    <text evidence="3 5 6 7">Phosphorylated on threonine residue(s) by PknH, PknA and PknB. Phosphorylation enhances the DNA-binding activity of EmbR. Dephosphorylated by PstP.</text>
</comment>
<comment type="similarity">
    <text evidence="9">Belongs to the AfsR/DnrI/RedD regulatory family.</text>
</comment>
<organism>
    <name type="scientific">Mycobacterium tuberculosis (strain ATCC 25618 / H37Rv)</name>
    <dbReference type="NCBI Taxonomy" id="83332"/>
    <lineage>
        <taxon>Bacteria</taxon>
        <taxon>Bacillati</taxon>
        <taxon>Actinomycetota</taxon>
        <taxon>Actinomycetes</taxon>
        <taxon>Mycobacteriales</taxon>
        <taxon>Mycobacteriaceae</taxon>
        <taxon>Mycobacterium</taxon>
        <taxon>Mycobacterium tuberculosis complex</taxon>
    </lineage>
</organism>
<gene>
    <name type="primary">embR</name>
    <name type="ordered locus">Rv1267c</name>
    <name type="ORF">MTCY50.15</name>
</gene>
<protein>
    <recommendedName>
        <fullName>Transcriptional regulatory protein EmbR</fullName>
    </recommendedName>
</protein>